<dbReference type="EMBL" id="AY771616">
    <property type="protein sequence ID" value="AAX14811.1"/>
    <property type="molecule type" value="mRNA"/>
</dbReference>
<dbReference type="EMBL" id="AY771617">
    <property type="protein sequence ID" value="AAX14812.1"/>
    <property type="molecule type" value="mRNA"/>
</dbReference>
<dbReference type="EMBL" id="AY771618">
    <property type="protein sequence ID" value="AAX14813.1"/>
    <property type="molecule type" value="mRNA"/>
</dbReference>
<dbReference type="CCDS" id="CCDS37543.1">
    <molecule id="Q5DID3-2"/>
</dbReference>
<dbReference type="RefSeq" id="NP_803416.2">
    <molecule id="Q5DID3-2"/>
    <property type="nucleotide sequence ID" value="NM_177465.4"/>
</dbReference>
<dbReference type="RefSeq" id="XP_006524677.1">
    <molecule id="Q5DID3-1"/>
    <property type="nucleotide sequence ID" value="XM_006524614.3"/>
</dbReference>
<dbReference type="SMR" id="Q5DID3"/>
<dbReference type="BioGRID" id="206331">
    <property type="interactions" value="2"/>
</dbReference>
<dbReference type="FunCoup" id="Q5DID3">
    <property type="interactions" value="79"/>
</dbReference>
<dbReference type="STRING" id="10090.ENSMUSP00000110202"/>
<dbReference type="GlyCosmos" id="Q5DID3">
    <property type="glycosylation" value="9 sites, No reported glycans"/>
</dbReference>
<dbReference type="GlyGen" id="Q5DID3">
    <property type="glycosylation" value="15 sites, 4 N-linked glycans (4 sites)"/>
</dbReference>
<dbReference type="iPTMnet" id="Q5DID3"/>
<dbReference type="PhosphoSitePlus" id="Q5DID3"/>
<dbReference type="PaxDb" id="10090-ENSMUSP00000110202"/>
<dbReference type="ProteomicsDB" id="275391">
    <molecule id="Q5DID3-1"/>
</dbReference>
<dbReference type="ProteomicsDB" id="275392">
    <molecule id="Q5DID3-2"/>
</dbReference>
<dbReference type="ProteomicsDB" id="275393">
    <molecule id="Q5DID3-3"/>
</dbReference>
<dbReference type="Antibodypedia" id="42290">
    <property type="antibodies" value="41 antibodies from 10 providers"/>
</dbReference>
<dbReference type="DNASU" id="52020"/>
<dbReference type="Ensembl" id="ENSMUST00000114555.3">
    <molecule id="Q5DID3-2"/>
    <property type="protein sequence ID" value="ENSMUSP00000110202.2"/>
    <property type="gene ID" value="ENSMUSG00000054134.16"/>
</dbReference>
<dbReference type="Ensembl" id="ENSMUST00000235156.2">
    <molecule id="Q5DID3-3"/>
    <property type="protein sequence ID" value="ENSMUSP00000157913.2"/>
    <property type="gene ID" value="ENSMUSG00000054134.16"/>
</dbReference>
<dbReference type="Ensembl" id="ENSMUST00000237889.2">
    <molecule id="Q5DID3-1"/>
    <property type="protein sequence ID" value="ENSMUSP00000157726.2"/>
    <property type="gene ID" value="ENSMUSG00000054134.16"/>
</dbReference>
<dbReference type="GeneID" id="52020"/>
<dbReference type="KEGG" id="mmu:52020"/>
<dbReference type="UCSC" id="uc008buf.1">
    <molecule id="Q5DID3-2"/>
    <property type="organism name" value="mouse"/>
</dbReference>
<dbReference type="UCSC" id="uc008bug.1">
    <molecule id="Q5DID3-1"/>
    <property type="organism name" value="mouse"/>
</dbReference>
<dbReference type="UCSC" id="uc008buh.1">
    <molecule id="Q5DID3-3"/>
    <property type="organism name" value="mouse"/>
</dbReference>
<dbReference type="AGR" id="MGI:1929785"/>
<dbReference type="CTD" id="89766"/>
<dbReference type="MGI" id="MGI:1929785">
    <property type="gene designation" value="Umodl1"/>
</dbReference>
<dbReference type="VEuPathDB" id="HostDB:ENSMUSG00000054134"/>
<dbReference type="eggNOG" id="ENOG502QVDQ">
    <property type="taxonomic scope" value="Eukaryota"/>
</dbReference>
<dbReference type="GeneTree" id="ENSGT00940000159975"/>
<dbReference type="HOGENOM" id="CLU_005456_0_0_1"/>
<dbReference type="InParanoid" id="Q5DID3"/>
<dbReference type="OMA" id="NSFEMSW"/>
<dbReference type="OrthoDB" id="82472at9989"/>
<dbReference type="PhylomeDB" id="Q5DID3"/>
<dbReference type="TreeFam" id="TF329882"/>
<dbReference type="BioGRID-ORCS" id="52020">
    <property type="hits" value="5 hits in 80 CRISPR screens"/>
</dbReference>
<dbReference type="PRO" id="PR:Q5DID3"/>
<dbReference type="Proteomes" id="UP000000589">
    <property type="component" value="Chromosome 17"/>
</dbReference>
<dbReference type="RNAct" id="Q5DID3">
    <property type="molecule type" value="protein"/>
</dbReference>
<dbReference type="Bgee" id="ENSMUSG00000054134">
    <property type="expression patterns" value="Expressed in olfactory epithelium and 33 other cell types or tissues"/>
</dbReference>
<dbReference type="ExpressionAtlas" id="Q5DID3">
    <property type="expression patterns" value="baseline and differential"/>
</dbReference>
<dbReference type="GO" id="GO:0009897">
    <property type="term" value="C:external side of plasma membrane"/>
    <property type="evidence" value="ECO:0000314"/>
    <property type="project" value="MGI"/>
</dbReference>
<dbReference type="GO" id="GO:0005615">
    <property type="term" value="C:extracellular space"/>
    <property type="evidence" value="ECO:0000314"/>
    <property type="project" value="MGI"/>
</dbReference>
<dbReference type="GO" id="GO:0005509">
    <property type="term" value="F:calcium ion binding"/>
    <property type="evidence" value="ECO:0007669"/>
    <property type="project" value="InterPro"/>
</dbReference>
<dbReference type="GO" id="GO:0030414">
    <property type="term" value="F:peptidase inhibitor activity"/>
    <property type="evidence" value="ECO:0007669"/>
    <property type="project" value="InterPro"/>
</dbReference>
<dbReference type="GO" id="GO:0060612">
    <property type="term" value="P:adipose tissue development"/>
    <property type="evidence" value="ECO:0000314"/>
    <property type="project" value="MGI"/>
</dbReference>
<dbReference type="GO" id="GO:0097211">
    <property type="term" value="P:cellular response to gonadotropin-releasing hormone"/>
    <property type="evidence" value="ECO:0000314"/>
    <property type="project" value="MGI"/>
</dbReference>
<dbReference type="GO" id="GO:0042981">
    <property type="term" value="P:regulation of apoptotic process"/>
    <property type="evidence" value="ECO:0000314"/>
    <property type="project" value="MGI"/>
</dbReference>
<dbReference type="GO" id="GO:0050793">
    <property type="term" value="P:regulation of developmental process"/>
    <property type="evidence" value="ECO:0000314"/>
    <property type="project" value="MGI"/>
</dbReference>
<dbReference type="GO" id="GO:0010468">
    <property type="term" value="P:regulation of gene expression"/>
    <property type="evidence" value="ECO:0000314"/>
    <property type="project" value="MGI"/>
</dbReference>
<dbReference type="GO" id="GO:1904708">
    <property type="term" value="P:regulation of granulosa cell apoptotic process"/>
    <property type="evidence" value="ECO:0000314"/>
    <property type="project" value="MGI"/>
</dbReference>
<dbReference type="GO" id="GO:2000354">
    <property type="term" value="P:regulation of ovarian follicle development"/>
    <property type="evidence" value="ECO:0000314"/>
    <property type="project" value="MGI"/>
</dbReference>
<dbReference type="GO" id="GO:2000241">
    <property type="term" value="P:regulation of reproductive process"/>
    <property type="evidence" value="ECO:0000314"/>
    <property type="project" value="MGI"/>
</dbReference>
<dbReference type="GO" id="GO:0007338">
    <property type="term" value="P:single fertilization"/>
    <property type="evidence" value="ECO:0000314"/>
    <property type="project" value="MGI"/>
</dbReference>
<dbReference type="CDD" id="cd00054">
    <property type="entry name" value="EGF_CA"/>
    <property type="match status" value="3"/>
</dbReference>
<dbReference type="CDD" id="cd00063">
    <property type="entry name" value="FN3"/>
    <property type="match status" value="1"/>
</dbReference>
<dbReference type="FunFam" id="2.10.25.10:FF:000038">
    <property type="entry name" value="Fibrillin 2"/>
    <property type="match status" value="1"/>
</dbReference>
<dbReference type="Gene3D" id="4.10.75.10">
    <property type="entry name" value="Elafin-like"/>
    <property type="match status" value="1"/>
</dbReference>
<dbReference type="Gene3D" id="2.60.40.10">
    <property type="entry name" value="Immunoglobulins"/>
    <property type="match status" value="1"/>
</dbReference>
<dbReference type="Gene3D" id="2.10.25.10">
    <property type="entry name" value="Laminin"/>
    <property type="match status" value="2"/>
</dbReference>
<dbReference type="Gene3D" id="2.60.40.4100">
    <property type="entry name" value="Zona pellucida, ZP-C domain"/>
    <property type="match status" value="1"/>
</dbReference>
<dbReference type="Gene3D" id="2.60.40.3210">
    <property type="entry name" value="Zona pellucida, ZP-N domain"/>
    <property type="match status" value="1"/>
</dbReference>
<dbReference type="InterPro" id="IPR001881">
    <property type="entry name" value="EGF-like_Ca-bd_dom"/>
</dbReference>
<dbReference type="InterPro" id="IPR000742">
    <property type="entry name" value="EGF-like_dom"/>
</dbReference>
<dbReference type="InterPro" id="IPR000152">
    <property type="entry name" value="EGF-type_Asp/Asn_hydroxyl_site"/>
</dbReference>
<dbReference type="InterPro" id="IPR018097">
    <property type="entry name" value="EGF_Ca-bd_CS"/>
</dbReference>
<dbReference type="InterPro" id="IPR036645">
    <property type="entry name" value="Elafin-like_sf"/>
</dbReference>
<dbReference type="InterPro" id="IPR011489">
    <property type="entry name" value="EMI_domain"/>
</dbReference>
<dbReference type="InterPro" id="IPR003961">
    <property type="entry name" value="FN3_dom"/>
</dbReference>
<dbReference type="InterPro" id="IPR036116">
    <property type="entry name" value="FN3_sf"/>
</dbReference>
<dbReference type="InterPro" id="IPR013783">
    <property type="entry name" value="Ig-like_fold"/>
</dbReference>
<dbReference type="InterPro" id="IPR049883">
    <property type="entry name" value="NOTCH1_EGF-like"/>
</dbReference>
<dbReference type="InterPro" id="IPR000082">
    <property type="entry name" value="SEA_dom"/>
</dbReference>
<dbReference type="InterPro" id="IPR008197">
    <property type="entry name" value="WAP_dom"/>
</dbReference>
<dbReference type="InterPro" id="IPR055355">
    <property type="entry name" value="ZP-C"/>
</dbReference>
<dbReference type="InterPro" id="IPR042235">
    <property type="entry name" value="ZP-C_dom"/>
</dbReference>
<dbReference type="InterPro" id="IPR055356">
    <property type="entry name" value="ZP-N"/>
</dbReference>
<dbReference type="InterPro" id="IPR048290">
    <property type="entry name" value="ZP_chr"/>
</dbReference>
<dbReference type="InterPro" id="IPR001507">
    <property type="entry name" value="ZP_dom"/>
</dbReference>
<dbReference type="PANTHER" id="PTHR14002">
    <property type="entry name" value="ENDOGLIN/TGF-BETA RECEPTOR TYPE III"/>
    <property type="match status" value="1"/>
</dbReference>
<dbReference type="PANTHER" id="PTHR14002:SF22">
    <property type="entry name" value="UROMODULIN-LIKE 1"/>
    <property type="match status" value="1"/>
</dbReference>
<dbReference type="Pfam" id="PF07645">
    <property type="entry name" value="EGF_CA"/>
    <property type="match status" value="3"/>
</dbReference>
<dbReference type="Pfam" id="PF00041">
    <property type="entry name" value="fn3"/>
    <property type="match status" value="1"/>
</dbReference>
<dbReference type="Pfam" id="PF00095">
    <property type="entry name" value="WAP"/>
    <property type="match status" value="1"/>
</dbReference>
<dbReference type="Pfam" id="PF00100">
    <property type="entry name" value="Zona_pellucida"/>
    <property type="match status" value="1"/>
</dbReference>
<dbReference type="Pfam" id="PF23344">
    <property type="entry name" value="ZP-N"/>
    <property type="match status" value="1"/>
</dbReference>
<dbReference type="PRINTS" id="PR00023">
    <property type="entry name" value="ZPELLUCIDA"/>
</dbReference>
<dbReference type="SMART" id="SM00181">
    <property type="entry name" value="EGF"/>
    <property type="match status" value="2"/>
</dbReference>
<dbReference type="SMART" id="SM00179">
    <property type="entry name" value="EGF_CA"/>
    <property type="match status" value="3"/>
</dbReference>
<dbReference type="SMART" id="SM00060">
    <property type="entry name" value="FN3"/>
    <property type="match status" value="2"/>
</dbReference>
<dbReference type="SMART" id="SM00217">
    <property type="entry name" value="WAP"/>
    <property type="match status" value="1"/>
</dbReference>
<dbReference type="SMART" id="SM00241">
    <property type="entry name" value="ZP"/>
    <property type="match status" value="1"/>
</dbReference>
<dbReference type="SUPFAM" id="SSF57196">
    <property type="entry name" value="EGF/Laminin"/>
    <property type="match status" value="2"/>
</dbReference>
<dbReference type="SUPFAM" id="SSF57256">
    <property type="entry name" value="Elafin-like"/>
    <property type="match status" value="1"/>
</dbReference>
<dbReference type="SUPFAM" id="SSF49265">
    <property type="entry name" value="Fibronectin type III"/>
    <property type="match status" value="1"/>
</dbReference>
<dbReference type="PROSITE" id="PS00010">
    <property type="entry name" value="ASX_HYDROXYL"/>
    <property type="match status" value="2"/>
</dbReference>
<dbReference type="PROSITE" id="PS50026">
    <property type="entry name" value="EGF_3"/>
    <property type="match status" value="3"/>
</dbReference>
<dbReference type="PROSITE" id="PS01187">
    <property type="entry name" value="EGF_CA"/>
    <property type="match status" value="3"/>
</dbReference>
<dbReference type="PROSITE" id="PS51041">
    <property type="entry name" value="EMI"/>
    <property type="match status" value="1"/>
</dbReference>
<dbReference type="PROSITE" id="PS50853">
    <property type="entry name" value="FN3"/>
    <property type="match status" value="2"/>
</dbReference>
<dbReference type="PROSITE" id="PS50024">
    <property type="entry name" value="SEA"/>
    <property type="match status" value="2"/>
</dbReference>
<dbReference type="PROSITE" id="PS51390">
    <property type="entry name" value="WAP"/>
    <property type="match status" value="1"/>
</dbReference>
<dbReference type="PROSITE" id="PS51034">
    <property type="entry name" value="ZP_2"/>
    <property type="match status" value="1"/>
</dbReference>
<feature type="signal peptide" evidence="2">
    <location>
        <begin position="1"/>
        <end position="22"/>
    </location>
</feature>
<feature type="chain" id="PRO_0000228128" description="Uromodulin-like 1">
    <location>
        <begin position="23"/>
        <end position="1319"/>
    </location>
</feature>
<feature type="topological domain" description="Extracellular" evidence="2">
    <location>
        <begin position="23"/>
        <end position="1273"/>
    </location>
</feature>
<feature type="transmembrane region" description="Helical" evidence="2">
    <location>
        <begin position="1274"/>
        <end position="1294"/>
    </location>
</feature>
<feature type="topological domain" description="Cytoplasmic" evidence="2">
    <location>
        <begin position="1295"/>
        <end position="1319"/>
    </location>
</feature>
<feature type="domain" description="EMI" evidence="7">
    <location>
        <begin position="34"/>
        <end position="107"/>
    </location>
</feature>
<feature type="domain" description="WAP" evidence="8">
    <location>
        <begin position="115"/>
        <end position="159"/>
    </location>
</feature>
<feature type="domain" description="EGF-like 1; calcium-binding" evidence="3">
    <location>
        <begin position="265"/>
        <end position="306"/>
    </location>
</feature>
<feature type="domain" description="Fibronectin type-III 1" evidence="5">
    <location>
        <begin position="307"/>
        <end position="391"/>
    </location>
</feature>
<feature type="domain" description="SEA 1" evidence="4">
    <location>
        <begin position="389"/>
        <end position="503"/>
    </location>
</feature>
<feature type="domain" description="EGF-like 2; calcium-binding" evidence="3">
    <location>
        <begin position="500"/>
        <end position="545"/>
    </location>
</feature>
<feature type="domain" description="Fibronectin type-III 2" evidence="5">
    <location>
        <begin position="709"/>
        <end position="795"/>
    </location>
</feature>
<feature type="domain" description="SEA 2" evidence="4">
    <location>
        <begin position="792"/>
        <end position="904"/>
    </location>
</feature>
<feature type="domain" description="EGF-like 3; calcium-binding" evidence="3">
    <location>
        <begin position="901"/>
        <end position="945"/>
    </location>
</feature>
<feature type="domain" description="ZP" evidence="6">
    <location>
        <begin position="995"/>
        <end position="1238"/>
    </location>
</feature>
<feature type="region of interest" description="Disordered" evidence="9">
    <location>
        <begin position="569"/>
        <end position="649"/>
    </location>
</feature>
<feature type="region of interest" description="Disordered" evidence="9">
    <location>
        <begin position="664"/>
        <end position="703"/>
    </location>
</feature>
<feature type="region of interest" description="Disordered" evidence="9">
    <location>
        <begin position="939"/>
        <end position="966"/>
    </location>
</feature>
<feature type="compositionally biased region" description="Low complexity" evidence="9">
    <location>
        <begin position="619"/>
        <end position="632"/>
    </location>
</feature>
<feature type="compositionally biased region" description="Basic and acidic residues" evidence="9">
    <location>
        <begin position="638"/>
        <end position="647"/>
    </location>
</feature>
<feature type="compositionally biased region" description="Polar residues" evidence="9">
    <location>
        <begin position="664"/>
        <end position="678"/>
    </location>
</feature>
<feature type="compositionally biased region" description="Polar residues" evidence="9">
    <location>
        <begin position="950"/>
        <end position="961"/>
    </location>
</feature>
<feature type="glycosylation site" description="N-linked (GlcNAc...) asparagine" evidence="2">
    <location>
        <position position="90"/>
    </location>
</feature>
<feature type="glycosylation site" description="N-linked (GlcNAc...) asparagine" evidence="2">
    <location>
        <position position="110"/>
    </location>
</feature>
<feature type="glycosylation site" description="N-linked (GlcNAc...) asparagine" evidence="2">
    <location>
        <position position="172"/>
    </location>
</feature>
<feature type="glycosylation site" description="N-linked (GlcNAc...) asparagine" evidence="2">
    <location>
        <position position="193"/>
    </location>
</feature>
<feature type="glycosylation site" description="N-linked (GlcNAc...) asparagine" evidence="2">
    <location>
        <position position="243"/>
    </location>
</feature>
<feature type="glycosylation site" description="N-linked (GlcNAc...) asparagine" evidence="2">
    <location>
        <position position="315"/>
    </location>
</feature>
<feature type="glycosylation site" description="N-linked (GlcNAc...) asparagine" evidence="2">
    <location>
        <position position="717"/>
    </location>
</feature>
<feature type="glycosylation site" description="N-linked (GlcNAc...) asparagine" evidence="2">
    <location>
        <position position="757"/>
    </location>
</feature>
<feature type="glycosylation site" description="N-linked (GlcNAc...) asparagine" evidence="2">
    <location>
        <position position="951"/>
    </location>
</feature>
<feature type="disulfide bond" evidence="2">
    <location>
        <begin position="38"/>
        <end position="95"/>
    </location>
</feature>
<feature type="disulfide bond" evidence="2">
    <location>
        <begin position="62"/>
        <end position="71"/>
    </location>
</feature>
<feature type="disulfide bond" evidence="2">
    <location>
        <begin position="94"/>
        <end position="105"/>
    </location>
</feature>
<feature type="disulfide bond" evidence="1">
    <location>
        <begin position="269"/>
        <end position="283"/>
    </location>
</feature>
<feature type="disulfide bond" evidence="1">
    <location>
        <begin position="277"/>
        <end position="292"/>
    </location>
</feature>
<feature type="disulfide bond" evidence="1">
    <location>
        <begin position="504"/>
        <end position="518"/>
    </location>
</feature>
<feature type="disulfide bond" evidence="1">
    <location>
        <begin position="512"/>
        <end position="527"/>
    </location>
</feature>
<feature type="disulfide bond" evidence="1">
    <location>
        <begin position="529"/>
        <end position="544"/>
    </location>
</feature>
<feature type="disulfide bond" evidence="1">
    <location>
        <begin position="905"/>
        <end position="917"/>
    </location>
</feature>
<feature type="disulfide bond" evidence="1">
    <location>
        <begin position="912"/>
        <end position="926"/>
    </location>
</feature>
<feature type="disulfide bond" evidence="1">
    <location>
        <begin position="928"/>
        <end position="944"/>
    </location>
</feature>
<feature type="disulfide bond" evidence="1">
    <location>
        <begin position="1160"/>
        <end position="1218"/>
    </location>
</feature>
<feature type="splice variant" id="VSP_017661" description="In isoform 2." evidence="12">
    <original>G</original>
    <variation>GMEVPNVTPNLGKTHRSTSGVTSSVPWAPG</variation>
    <location>
        <position position="622"/>
    </location>
</feature>
<feature type="splice variant" id="VSP_017660" description="In isoform 3." evidence="12">
    <location>
        <begin position="707"/>
        <end position="792"/>
    </location>
</feature>
<keyword id="KW-0025">Alternative splicing</keyword>
<keyword id="KW-0106">Calcium</keyword>
<keyword id="KW-1003">Cell membrane</keyword>
<keyword id="KW-1015">Disulfide bond</keyword>
<keyword id="KW-0245">EGF-like domain</keyword>
<keyword id="KW-0325">Glycoprotein</keyword>
<keyword id="KW-0472">Membrane</keyword>
<keyword id="KW-1185">Reference proteome</keyword>
<keyword id="KW-0677">Repeat</keyword>
<keyword id="KW-0732">Signal</keyword>
<keyword id="KW-0812">Transmembrane</keyword>
<keyword id="KW-1133">Transmembrane helix</keyword>
<comment type="subcellular location">
    <subcellularLocation>
        <location evidence="11">Cell membrane</location>
        <topology evidence="11">Single-pass type I membrane protein</topology>
    </subcellularLocation>
</comment>
<comment type="alternative products">
    <event type="alternative splicing"/>
    <isoform>
        <id>Q5DID3-1</id>
        <name>1</name>
        <sequence type="displayed"/>
    </isoform>
    <isoform>
        <id>Q5DID3-2</id>
        <name>2</name>
        <sequence type="described" ref="VSP_017661"/>
    </isoform>
    <isoform>
        <id>Q5DID3-3</id>
        <name>3</name>
        <sequence type="described" ref="VSP_017660"/>
    </isoform>
</comment>
<comment type="developmental stage">
    <text evidence="10 11">First detected at 16.5 dpc only in olfactory epithelium (OE) and the epithelium of the vomeronasal organ (VNO). At this stage, expression in OE is punctate and is restricted to only some of the sensory neurons. At birth and postnatally, expression in these organs extends to more neurons. At 3 weeks, expression shows a smooth gradation from high apical to low basal within the layer of mature olfactory sensory neurons of the olfactory epithelium.</text>
</comment>
<sequence length="1319" mass="145320">MMSRTVRLVLLALACTVDLSQASGFTENGLSLLSYQLCSYPVTRSVQKLQAVQTSHTAYVYCGGWIPWKKCPKTVYRTQYLAMDVPESRNVTDCCAGFEQLGLYCVLSLNRSREFASRPGVCPTAEAEPLSPSCSLDTDCSGLQKCCSWPGGRHCVSPTPTGTEKSMVSWYNVTVLVKVGFEDLQREDPGLRNHTRLLYSLVTSALQPLNPAVHYLTSTGGKDTFTTVSWLLMGFPRLMTVANVSVMLDDMVNRVYEVVSIQVQDVNECLHSELQACSVREQCRNLEGSYQCVSSQRLNHTDEDCPPIRDFVALNVTSSSFHVSWSLNSTQNYNFHIQVYKGKEILRSAWTRGHTMAVSDLEAGVLYRVRTSYLGCGANVSATLVVKTDAQVFQVTIRIMDRNLTEQILDCSSGEFWNFSRQLFHEVQNSFPQAISDLYRQGRLRMQIVSLQAGSLVVTLRLTLQDPDFSVGVHTLTPMLPVLSVSNVFQVDQQRTFVQDWDECAHSSEHDCHPSARCINLEGSYTCQCLTARDASPSRAGRVCEGDMVIPTGDELSVTTKVTVPAASTGITTFGPETLTESLSSKHPRSTPARSQTWTPVPPSVRDGGSIVRQDRNSTGQGQTHGTHQGTTDAPLHTTRESQELITKDPPFLTATTTGYVVWHSSPTWKTPPNSTRLQNEDPRSSSFPGPPSAPTDVTPESPACVPGPIGKVTVSNVTSTSFSLEWPADIRLSPAFHLTLVSPRGPAMTMETQNNNVTLSGLEWGTLYLVEIVAKVCGKEGARTQLKVRTVAQKLAGNVRITSMQYSESFLNTSSREHREFVELFFRTVRDSLPATLRQHMDAGRIRVDIINITNGSIVVEFNLLMTADLDVREVSAGFLNALQNTSMLEVVRGKTFMQDYNECDMKEDDCAPGTCRNTFGSFTCSCDEGGPDSQVEYSGRSCDGDPSGNMTQTPGSEWSPTPAGTRGVPVPIASSTAQDLPLRLNLMDAVSVSCEIETVIITIQKRFLQQAAIPEASLYLGEPSCNVSRSNSTHVFLVAGWGECGTILQSNMTTTVVTTTLRNNLSPEGVIHHPQFLSPIHCAFQNDVLTSSGYTPQWGVYTVIEDLHGTGNFVTEMQLYIGDSPIPQNYSVSASDEIKIEVGLHRQKSSLKVVLTECWATPSSNAKDPVTFSFINNSCPVPNTYTSVIQNGHSSKAQFKLRIFSFINNSIVYLHCKLRVCMENPRNSCRISCNDFRSLRSSEALHQMTWGPLHRTEGAQACTKPVLGTGYIILLAAAALLVVAGATTLLILRYQRVRQKYNLRIQTDDFSYQVFSQ</sequence>
<organism>
    <name type="scientific">Mus musculus</name>
    <name type="common">Mouse</name>
    <dbReference type="NCBI Taxonomy" id="10090"/>
    <lineage>
        <taxon>Eukaryota</taxon>
        <taxon>Metazoa</taxon>
        <taxon>Chordata</taxon>
        <taxon>Craniata</taxon>
        <taxon>Vertebrata</taxon>
        <taxon>Euteleostomi</taxon>
        <taxon>Mammalia</taxon>
        <taxon>Eutheria</taxon>
        <taxon>Euarchontoglires</taxon>
        <taxon>Glires</taxon>
        <taxon>Rodentia</taxon>
        <taxon>Myomorpha</taxon>
        <taxon>Muroidea</taxon>
        <taxon>Muridae</taxon>
        <taxon>Murinae</taxon>
        <taxon>Mus</taxon>
        <taxon>Mus</taxon>
    </lineage>
</organism>
<name>UROL1_MOUSE</name>
<accession>Q5DID3</accession>
<accession>Q5DID1</accession>
<accession>Q5DID2</accession>
<proteinExistence type="evidence at protein level"/>
<gene>
    <name type="primary">Umodl1</name>
</gene>
<evidence type="ECO:0000250" key="1"/>
<evidence type="ECO:0000255" key="2"/>
<evidence type="ECO:0000255" key="3">
    <source>
        <dbReference type="PROSITE-ProRule" id="PRU00076"/>
    </source>
</evidence>
<evidence type="ECO:0000255" key="4">
    <source>
        <dbReference type="PROSITE-ProRule" id="PRU00188"/>
    </source>
</evidence>
<evidence type="ECO:0000255" key="5">
    <source>
        <dbReference type="PROSITE-ProRule" id="PRU00316"/>
    </source>
</evidence>
<evidence type="ECO:0000255" key="6">
    <source>
        <dbReference type="PROSITE-ProRule" id="PRU00375"/>
    </source>
</evidence>
<evidence type="ECO:0000255" key="7">
    <source>
        <dbReference type="PROSITE-ProRule" id="PRU00384"/>
    </source>
</evidence>
<evidence type="ECO:0000255" key="8">
    <source>
        <dbReference type="PROSITE-ProRule" id="PRU00722"/>
    </source>
</evidence>
<evidence type="ECO:0000256" key="9">
    <source>
        <dbReference type="SAM" id="MobiDB-lite"/>
    </source>
</evidence>
<evidence type="ECO:0000269" key="10">
    <source>
    </source>
</evidence>
<evidence type="ECO:0000269" key="11">
    <source>
    </source>
</evidence>
<evidence type="ECO:0000303" key="12">
    <source>
    </source>
</evidence>
<reference key="1">
    <citation type="journal article" date="2005" name="Eur. J. Neurosci.">
        <title>UMODL1/olfactorin is an extracellular membrane-bound molecule with a restricted spatial expression in olfactory and vomeronasal neurons.</title>
        <authorList>
            <person name="Di Schiavi E."/>
            <person name="Riano E."/>
            <person name="Heye B."/>
            <person name="Bazzicalupo P."/>
            <person name="Rugarli E.I."/>
        </authorList>
    </citation>
    <scope>NUCLEOTIDE SEQUENCE [MRNA] (ISOFORMS 1; 2 AND 3)</scope>
    <scope>SUBCELLULAR LOCATION</scope>
    <scope>TOPOLOGY</scope>
    <scope>DEVELOPMENTAL STAGE</scope>
    <source>
        <strain>C57BL/6J</strain>
    </source>
</reference>
<reference key="2">
    <citation type="journal article" date="2005" name="J. Comp. Neurol.">
        <title>Differentially expressed transcripts from phenotypically identified olfactory sensory neurons.</title>
        <authorList>
            <person name="Yu T.-T."/>
            <person name="McIntyre J.C."/>
            <person name="Bose S.C."/>
            <person name="Hardin D."/>
            <person name="Owen M.C."/>
            <person name="McClintock T.S."/>
        </authorList>
    </citation>
    <scope>DEVELOPMENTAL STAGE</scope>
</reference>
<protein>
    <recommendedName>
        <fullName>Uromodulin-like 1</fullName>
    </recommendedName>
    <alternativeName>
        <fullName>Olfactorin</fullName>
    </alternativeName>
</protein>